<gene>
    <name evidence="1" type="primary">nadA</name>
    <name type="ordered locus">PMT_0661</name>
</gene>
<comment type="function">
    <text evidence="1">Catalyzes the condensation of iminoaspartate with dihydroxyacetone phosphate to form quinolinate.</text>
</comment>
<comment type="catalytic activity">
    <reaction evidence="1">
        <text>iminosuccinate + dihydroxyacetone phosphate = quinolinate + phosphate + 2 H2O + H(+)</text>
        <dbReference type="Rhea" id="RHEA:25888"/>
        <dbReference type="ChEBI" id="CHEBI:15377"/>
        <dbReference type="ChEBI" id="CHEBI:15378"/>
        <dbReference type="ChEBI" id="CHEBI:29959"/>
        <dbReference type="ChEBI" id="CHEBI:43474"/>
        <dbReference type="ChEBI" id="CHEBI:57642"/>
        <dbReference type="ChEBI" id="CHEBI:77875"/>
        <dbReference type="EC" id="2.5.1.72"/>
    </reaction>
    <physiologicalReaction direction="left-to-right" evidence="1">
        <dbReference type="Rhea" id="RHEA:25889"/>
    </physiologicalReaction>
</comment>
<comment type="cofactor">
    <cofactor evidence="1">
        <name>[4Fe-4S] cluster</name>
        <dbReference type="ChEBI" id="CHEBI:49883"/>
    </cofactor>
    <text evidence="1">Binds 1 [4Fe-4S] cluster per subunit.</text>
</comment>
<comment type="pathway">
    <text evidence="1">Cofactor biosynthesis; NAD(+) biosynthesis; quinolinate from iminoaspartate: step 1/1.</text>
</comment>
<comment type="subcellular location">
    <subcellularLocation>
        <location evidence="1">Cytoplasm</location>
    </subcellularLocation>
</comment>
<comment type="similarity">
    <text evidence="1">Belongs to the quinolinate synthase family. Type 2 subfamily.</text>
</comment>
<dbReference type="EC" id="2.5.1.72" evidence="1"/>
<dbReference type="EMBL" id="BX548175">
    <property type="protein sequence ID" value="CAE20836.1"/>
    <property type="molecule type" value="Genomic_DNA"/>
</dbReference>
<dbReference type="RefSeq" id="WP_011130040.1">
    <property type="nucleotide sequence ID" value="NC_005071.1"/>
</dbReference>
<dbReference type="SMR" id="Q7V7S6"/>
<dbReference type="KEGG" id="pmt:PMT_0661"/>
<dbReference type="eggNOG" id="COG0379">
    <property type="taxonomic scope" value="Bacteria"/>
</dbReference>
<dbReference type="HOGENOM" id="CLU_047382_0_0_3"/>
<dbReference type="UniPathway" id="UPA00253">
    <property type="reaction ID" value="UER00327"/>
</dbReference>
<dbReference type="Proteomes" id="UP000001423">
    <property type="component" value="Chromosome"/>
</dbReference>
<dbReference type="GO" id="GO:0005829">
    <property type="term" value="C:cytosol"/>
    <property type="evidence" value="ECO:0007669"/>
    <property type="project" value="TreeGrafter"/>
</dbReference>
<dbReference type="GO" id="GO:0051539">
    <property type="term" value="F:4 iron, 4 sulfur cluster binding"/>
    <property type="evidence" value="ECO:0007669"/>
    <property type="project" value="UniProtKB-KW"/>
</dbReference>
<dbReference type="GO" id="GO:0046872">
    <property type="term" value="F:metal ion binding"/>
    <property type="evidence" value="ECO:0007669"/>
    <property type="project" value="UniProtKB-KW"/>
</dbReference>
<dbReference type="GO" id="GO:0008987">
    <property type="term" value="F:quinolinate synthetase A activity"/>
    <property type="evidence" value="ECO:0007669"/>
    <property type="project" value="UniProtKB-UniRule"/>
</dbReference>
<dbReference type="GO" id="GO:0034628">
    <property type="term" value="P:'de novo' NAD biosynthetic process from L-aspartate"/>
    <property type="evidence" value="ECO:0007669"/>
    <property type="project" value="TreeGrafter"/>
</dbReference>
<dbReference type="FunFam" id="3.40.50.10800:FF:000003">
    <property type="entry name" value="Quinolinate synthase A"/>
    <property type="match status" value="1"/>
</dbReference>
<dbReference type="Gene3D" id="3.40.50.10800">
    <property type="entry name" value="NadA-like"/>
    <property type="match status" value="3"/>
</dbReference>
<dbReference type="HAMAP" id="MF_00568">
    <property type="entry name" value="NadA_type2"/>
    <property type="match status" value="1"/>
</dbReference>
<dbReference type="InterPro" id="IPR003473">
    <property type="entry name" value="NadA"/>
</dbReference>
<dbReference type="InterPro" id="IPR036094">
    <property type="entry name" value="NadA_sf"/>
</dbReference>
<dbReference type="InterPro" id="IPR023066">
    <property type="entry name" value="Quinolinate_synth_type2"/>
</dbReference>
<dbReference type="NCBIfam" id="TIGR00550">
    <property type="entry name" value="nadA"/>
    <property type="match status" value="1"/>
</dbReference>
<dbReference type="NCBIfam" id="NF006878">
    <property type="entry name" value="PRK09375.1-2"/>
    <property type="match status" value="1"/>
</dbReference>
<dbReference type="PANTHER" id="PTHR30573:SF0">
    <property type="entry name" value="QUINOLINATE SYNTHASE, CHLOROPLASTIC"/>
    <property type="match status" value="1"/>
</dbReference>
<dbReference type="PANTHER" id="PTHR30573">
    <property type="entry name" value="QUINOLINATE SYNTHETASE A"/>
    <property type="match status" value="1"/>
</dbReference>
<dbReference type="Pfam" id="PF02445">
    <property type="entry name" value="NadA"/>
    <property type="match status" value="1"/>
</dbReference>
<dbReference type="SUPFAM" id="SSF142754">
    <property type="entry name" value="NadA-like"/>
    <property type="match status" value="1"/>
</dbReference>
<protein>
    <recommendedName>
        <fullName evidence="1">Quinolinate synthase</fullName>
        <ecNumber evidence="1">2.5.1.72</ecNumber>
    </recommendedName>
</protein>
<organism>
    <name type="scientific">Prochlorococcus marinus (strain MIT 9313)</name>
    <dbReference type="NCBI Taxonomy" id="74547"/>
    <lineage>
        <taxon>Bacteria</taxon>
        <taxon>Bacillati</taxon>
        <taxon>Cyanobacteriota</taxon>
        <taxon>Cyanophyceae</taxon>
        <taxon>Synechococcales</taxon>
        <taxon>Prochlorococcaceae</taxon>
        <taxon>Prochlorococcus</taxon>
    </lineage>
</organism>
<keyword id="KW-0004">4Fe-4S</keyword>
<keyword id="KW-0963">Cytoplasm</keyword>
<keyword id="KW-0408">Iron</keyword>
<keyword id="KW-0411">Iron-sulfur</keyword>
<keyword id="KW-0479">Metal-binding</keyword>
<keyword id="KW-0662">Pyridine nucleotide biosynthesis</keyword>
<keyword id="KW-1185">Reference proteome</keyword>
<keyword id="KW-0808">Transferase</keyword>
<proteinExistence type="inferred from homology"/>
<feature type="chain" id="PRO_1000129442" description="Quinolinate synthase">
    <location>
        <begin position="1"/>
        <end position="333"/>
    </location>
</feature>
<feature type="binding site" evidence="1">
    <location>
        <position position="41"/>
    </location>
    <ligand>
        <name>iminosuccinate</name>
        <dbReference type="ChEBI" id="CHEBI:77875"/>
    </ligand>
</feature>
<feature type="binding site" evidence="1">
    <location>
        <position position="58"/>
    </location>
    <ligand>
        <name>iminosuccinate</name>
        <dbReference type="ChEBI" id="CHEBI:77875"/>
    </ligand>
</feature>
<feature type="binding site" evidence="1">
    <location>
        <position position="103"/>
    </location>
    <ligand>
        <name>[4Fe-4S] cluster</name>
        <dbReference type="ChEBI" id="CHEBI:49883"/>
    </ligand>
</feature>
<feature type="binding site" evidence="1">
    <location>
        <begin position="129"/>
        <end position="131"/>
    </location>
    <ligand>
        <name>iminosuccinate</name>
        <dbReference type="ChEBI" id="CHEBI:77875"/>
    </ligand>
</feature>
<feature type="binding site" evidence="1">
    <location>
        <position position="146"/>
    </location>
    <ligand>
        <name>iminosuccinate</name>
        <dbReference type="ChEBI" id="CHEBI:77875"/>
    </ligand>
</feature>
<feature type="binding site" evidence="1">
    <location>
        <position position="189"/>
    </location>
    <ligand>
        <name>[4Fe-4S] cluster</name>
        <dbReference type="ChEBI" id="CHEBI:49883"/>
    </ligand>
</feature>
<feature type="binding site" evidence="1">
    <location>
        <begin position="215"/>
        <end position="217"/>
    </location>
    <ligand>
        <name>iminosuccinate</name>
        <dbReference type="ChEBI" id="CHEBI:77875"/>
    </ligand>
</feature>
<feature type="binding site" evidence="1">
    <location>
        <position position="232"/>
    </location>
    <ligand>
        <name>iminosuccinate</name>
        <dbReference type="ChEBI" id="CHEBI:77875"/>
    </ligand>
</feature>
<feature type="binding site" evidence="1">
    <location>
        <position position="282"/>
    </location>
    <ligand>
        <name>[4Fe-4S] cluster</name>
        <dbReference type="ChEBI" id="CHEBI:49883"/>
    </ligand>
</feature>
<sequence>MVRMTAVCTAKTVSPVPSTRKELKGAIAELRKKLNAVILAHYYQDPEIQDIADFIGDSLELSRRAASTNADVIVFCGVHFMAETAKILSPEKIVLLPDLEAGCSLADDCPADEFAAFRDKHPDHIVVSYINCTAAVKAQSDLICTSSNAVELVNQLPKDQPILFAPDQNLGRWVQKQSGRKLTIWPGRCMVHETFSEEALLKLKIMHPEAKVIAHPECLENLLELADYIGSTSKLLEFTEISSCTKFIVLTEPGILHQMKLKNPKKEFMDVPGIDGCSCNECPYMRLNTLEKLWSCLSTMKPSIEIEEGVRQKAFIPIQRMLNMKETQEASEH</sequence>
<evidence type="ECO:0000255" key="1">
    <source>
        <dbReference type="HAMAP-Rule" id="MF_00568"/>
    </source>
</evidence>
<reference key="1">
    <citation type="journal article" date="2003" name="Nature">
        <title>Genome divergence in two Prochlorococcus ecotypes reflects oceanic niche differentiation.</title>
        <authorList>
            <person name="Rocap G."/>
            <person name="Larimer F.W."/>
            <person name="Lamerdin J.E."/>
            <person name="Malfatti S."/>
            <person name="Chain P."/>
            <person name="Ahlgren N.A."/>
            <person name="Arellano A."/>
            <person name="Coleman M."/>
            <person name="Hauser L."/>
            <person name="Hess W.R."/>
            <person name="Johnson Z.I."/>
            <person name="Land M.L."/>
            <person name="Lindell D."/>
            <person name="Post A.F."/>
            <person name="Regala W."/>
            <person name="Shah M."/>
            <person name="Shaw S.L."/>
            <person name="Steglich C."/>
            <person name="Sullivan M.B."/>
            <person name="Ting C.S."/>
            <person name="Tolonen A."/>
            <person name="Webb E.A."/>
            <person name="Zinser E.R."/>
            <person name="Chisholm S.W."/>
        </authorList>
    </citation>
    <scope>NUCLEOTIDE SEQUENCE [LARGE SCALE GENOMIC DNA]</scope>
    <source>
        <strain>MIT 9313</strain>
    </source>
</reference>
<accession>Q7V7S6</accession>
<name>NADA_PROMM</name>